<comment type="function">
    <text evidence="1">One of the primary rRNA binding proteins, it binds directly to 16S rRNA central domain where it helps coordinate assembly of the platform of the 30S subunit.</text>
</comment>
<comment type="subunit">
    <text evidence="1">Part of the 30S ribosomal subunit. Contacts proteins S5 and S12.</text>
</comment>
<comment type="similarity">
    <text evidence="1">Belongs to the universal ribosomal protein uS8 family.</text>
</comment>
<sequence>MVMTDPIADFLTRIRNANMVKHDKLELPASKIKKEIAEILKREGFIRDVEYIEDDNAGTIRVFLKYGATGERVITGLKRISKPGLRVYAKSTEVPKVLNGLGIAIVSTSQGVLTDKEARAKQVGGEVLAYVW</sequence>
<name>RS8_LISMF</name>
<proteinExistence type="inferred from homology"/>
<feature type="chain" id="PRO_0000126430" description="Small ribosomal subunit protein uS8">
    <location>
        <begin position="1"/>
        <end position="132"/>
    </location>
</feature>
<evidence type="ECO:0000255" key="1">
    <source>
        <dbReference type="HAMAP-Rule" id="MF_01302"/>
    </source>
</evidence>
<evidence type="ECO:0000305" key="2"/>
<dbReference type="EMBL" id="AE017262">
    <property type="protein sequence ID" value="AAT05356.1"/>
    <property type="molecule type" value="Genomic_DNA"/>
</dbReference>
<dbReference type="RefSeq" id="WP_003720937.1">
    <property type="nucleotide sequence ID" value="NC_002973.6"/>
</dbReference>
<dbReference type="SMR" id="Q71WG0"/>
<dbReference type="GeneID" id="93240499"/>
<dbReference type="KEGG" id="lmf:LMOf2365_2591"/>
<dbReference type="HOGENOM" id="CLU_098428_0_2_9"/>
<dbReference type="GO" id="GO:1990904">
    <property type="term" value="C:ribonucleoprotein complex"/>
    <property type="evidence" value="ECO:0007669"/>
    <property type="project" value="UniProtKB-KW"/>
</dbReference>
<dbReference type="GO" id="GO:0005840">
    <property type="term" value="C:ribosome"/>
    <property type="evidence" value="ECO:0007669"/>
    <property type="project" value="UniProtKB-KW"/>
</dbReference>
<dbReference type="GO" id="GO:0019843">
    <property type="term" value="F:rRNA binding"/>
    <property type="evidence" value="ECO:0007669"/>
    <property type="project" value="UniProtKB-UniRule"/>
</dbReference>
<dbReference type="GO" id="GO:0003735">
    <property type="term" value="F:structural constituent of ribosome"/>
    <property type="evidence" value="ECO:0007669"/>
    <property type="project" value="InterPro"/>
</dbReference>
<dbReference type="GO" id="GO:0006412">
    <property type="term" value="P:translation"/>
    <property type="evidence" value="ECO:0007669"/>
    <property type="project" value="UniProtKB-UniRule"/>
</dbReference>
<dbReference type="FunFam" id="3.30.1370.30:FF:000002">
    <property type="entry name" value="30S ribosomal protein S8"/>
    <property type="match status" value="1"/>
</dbReference>
<dbReference type="FunFam" id="3.30.1490.10:FF:000001">
    <property type="entry name" value="30S ribosomal protein S8"/>
    <property type="match status" value="1"/>
</dbReference>
<dbReference type="Gene3D" id="3.30.1370.30">
    <property type="match status" value="1"/>
</dbReference>
<dbReference type="Gene3D" id="3.30.1490.10">
    <property type="match status" value="1"/>
</dbReference>
<dbReference type="HAMAP" id="MF_01302_B">
    <property type="entry name" value="Ribosomal_uS8_B"/>
    <property type="match status" value="1"/>
</dbReference>
<dbReference type="InterPro" id="IPR000630">
    <property type="entry name" value="Ribosomal_uS8"/>
</dbReference>
<dbReference type="InterPro" id="IPR047863">
    <property type="entry name" value="Ribosomal_uS8_CS"/>
</dbReference>
<dbReference type="InterPro" id="IPR035987">
    <property type="entry name" value="Ribosomal_uS8_sf"/>
</dbReference>
<dbReference type="NCBIfam" id="NF001109">
    <property type="entry name" value="PRK00136.1"/>
    <property type="match status" value="1"/>
</dbReference>
<dbReference type="PANTHER" id="PTHR11758">
    <property type="entry name" value="40S RIBOSOMAL PROTEIN S15A"/>
    <property type="match status" value="1"/>
</dbReference>
<dbReference type="Pfam" id="PF00410">
    <property type="entry name" value="Ribosomal_S8"/>
    <property type="match status" value="1"/>
</dbReference>
<dbReference type="SUPFAM" id="SSF56047">
    <property type="entry name" value="Ribosomal protein S8"/>
    <property type="match status" value="1"/>
</dbReference>
<dbReference type="PROSITE" id="PS00053">
    <property type="entry name" value="RIBOSOMAL_S8"/>
    <property type="match status" value="1"/>
</dbReference>
<protein>
    <recommendedName>
        <fullName evidence="1">Small ribosomal subunit protein uS8</fullName>
    </recommendedName>
    <alternativeName>
        <fullName evidence="2">30S ribosomal protein S8</fullName>
    </alternativeName>
</protein>
<accession>Q71WG0</accession>
<gene>
    <name evidence="1" type="primary">rpsH</name>
    <name type="ordered locus">LMOf2365_2591</name>
</gene>
<reference key="1">
    <citation type="journal article" date="2004" name="Nucleic Acids Res.">
        <title>Whole genome comparisons of serotype 4b and 1/2a strains of the food-borne pathogen Listeria monocytogenes reveal new insights into the core genome components of this species.</title>
        <authorList>
            <person name="Nelson K.E."/>
            <person name="Fouts D.E."/>
            <person name="Mongodin E.F."/>
            <person name="Ravel J."/>
            <person name="DeBoy R.T."/>
            <person name="Kolonay J.F."/>
            <person name="Rasko D.A."/>
            <person name="Angiuoli S.V."/>
            <person name="Gill S.R."/>
            <person name="Paulsen I.T."/>
            <person name="Peterson J.D."/>
            <person name="White O."/>
            <person name="Nelson W.C."/>
            <person name="Nierman W.C."/>
            <person name="Beanan M.J."/>
            <person name="Brinkac L.M."/>
            <person name="Daugherty S.C."/>
            <person name="Dodson R.J."/>
            <person name="Durkin A.S."/>
            <person name="Madupu R."/>
            <person name="Haft D.H."/>
            <person name="Selengut J."/>
            <person name="Van Aken S.E."/>
            <person name="Khouri H.M."/>
            <person name="Fedorova N."/>
            <person name="Forberger H.A."/>
            <person name="Tran B."/>
            <person name="Kathariou S."/>
            <person name="Wonderling L.D."/>
            <person name="Uhlich G.A."/>
            <person name="Bayles D.O."/>
            <person name="Luchansky J.B."/>
            <person name="Fraser C.M."/>
        </authorList>
    </citation>
    <scope>NUCLEOTIDE SEQUENCE [LARGE SCALE GENOMIC DNA]</scope>
    <source>
        <strain>F2365</strain>
    </source>
</reference>
<keyword id="KW-0687">Ribonucleoprotein</keyword>
<keyword id="KW-0689">Ribosomal protein</keyword>
<keyword id="KW-0694">RNA-binding</keyword>
<keyword id="KW-0699">rRNA-binding</keyword>
<organism>
    <name type="scientific">Listeria monocytogenes serotype 4b (strain F2365)</name>
    <dbReference type="NCBI Taxonomy" id="265669"/>
    <lineage>
        <taxon>Bacteria</taxon>
        <taxon>Bacillati</taxon>
        <taxon>Bacillota</taxon>
        <taxon>Bacilli</taxon>
        <taxon>Bacillales</taxon>
        <taxon>Listeriaceae</taxon>
        <taxon>Listeria</taxon>
    </lineage>
</organism>